<dbReference type="EC" id="6.1.1.21" evidence="1"/>
<dbReference type="EMBL" id="CP001020">
    <property type="protein sequence ID" value="ACJ20304.1"/>
    <property type="molecule type" value="Genomic_DNA"/>
</dbReference>
<dbReference type="RefSeq" id="WP_005770805.1">
    <property type="nucleotide sequence ID" value="NC_011528.1"/>
</dbReference>
<dbReference type="SMR" id="B6J7Q5"/>
<dbReference type="KEGG" id="cbc:CbuK_1108"/>
<dbReference type="HOGENOM" id="CLU_025113_1_1_6"/>
<dbReference type="GO" id="GO:0005737">
    <property type="term" value="C:cytoplasm"/>
    <property type="evidence" value="ECO:0007669"/>
    <property type="project" value="UniProtKB-SubCell"/>
</dbReference>
<dbReference type="GO" id="GO:0005524">
    <property type="term" value="F:ATP binding"/>
    <property type="evidence" value="ECO:0007669"/>
    <property type="project" value="UniProtKB-UniRule"/>
</dbReference>
<dbReference type="GO" id="GO:0004821">
    <property type="term" value="F:histidine-tRNA ligase activity"/>
    <property type="evidence" value="ECO:0007669"/>
    <property type="project" value="UniProtKB-UniRule"/>
</dbReference>
<dbReference type="GO" id="GO:0006427">
    <property type="term" value="P:histidyl-tRNA aminoacylation"/>
    <property type="evidence" value="ECO:0007669"/>
    <property type="project" value="UniProtKB-UniRule"/>
</dbReference>
<dbReference type="CDD" id="cd00773">
    <property type="entry name" value="HisRS-like_core"/>
    <property type="match status" value="1"/>
</dbReference>
<dbReference type="CDD" id="cd00859">
    <property type="entry name" value="HisRS_anticodon"/>
    <property type="match status" value="1"/>
</dbReference>
<dbReference type="FunFam" id="3.30.930.10:FF:000005">
    <property type="entry name" value="Histidine--tRNA ligase"/>
    <property type="match status" value="1"/>
</dbReference>
<dbReference type="Gene3D" id="3.40.50.800">
    <property type="entry name" value="Anticodon-binding domain"/>
    <property type="match status" value="1"/>
</dbReference>
<dbReference type="Gene3D" id="3.30.930.10">
    <property type="entry name" value="Bira Bifunctional Protein, Domain 2"/>
    <property type="match status" value="1"/>
</dbReference>
<dbReference type="HAMAP" id="MF_00127">
    <property type="entry name" value="His_tRNA_synth"/>
    <property type="match status" value="1"/>
</dbReference>
<dbReference type="InterPro" id="IPR006195">
    <property type="entry name" value="aa-tRNA-synth_II"/>
</dbReference>
<dbReference type="InterPro" id="IPR045864">
    <property type="entry name" value="aa-tRNA-synth_II/BPL/LPL"/>
</dbReference>
<dbReference type="InterPro" id="IPR004154">
    <property type="entry name" value="Anticodon-bd"/>
</dbReference>
<dbReference type="InterPro" id="IPR036621">
    <property type="entry name" value="Anticodon-bd_dom_sf"/>
</dbReference>
<dbReference type="InterPro" id="IPR015807">
    <property type="entry name" value="His-tRNA-ligase"/>
</dbReference>
<dbReference type="InterPro" id="IPR041715">
    <property type="entry name" value="HisRS-like_core"/>
</dbReference>
<dbReference type="InterPro" id="IPR004516">
    <property type="entry name" value="HisRS/HisZ"/>
</dbReference>
<dbReference type="InterPro" id="IPR033656">
    <property type="entry name" value="HisRS_anticodon"/>
</dbReference>
<dbReference type="NCBIfam" id="TIGR00442">
    <property type="entry name" value="hisS"/>
    <property type="match status" value="1"/>
</dbReference>
<dbReference type="PANTHER" id="PTHR43707:SF1">
    <property type="entry name" value="HISTIDINE--TRNA LIGASE, MITOCHONDRIAL-RELATED"/>
    <property type="match status" value="1"/>
</dbReference>
<dbReference type="PANTHER" id="PTHR43707">
    <property type="entry name" value="HISTIDYL-TRNA SYNTHETASE"/>
    <property type="match status" value="1"/>
</dbReference>
<dbReference type="Pfam" id="PF03129">
    <property type="entry name" value="HGTP_anticodon"/>
    <property type="match status" value="1"/>
</dbReference>
<dbReference type="Pfam" id="PF13393">
    <property type="entry name" value="tRNA-synt_His"/>
    <property type="match status" value="1"/>
</dbReference>
<dbReference type="PIRSF" id="PIRSF001549">
    <property type="entry name" value="His-tRNA_synth"/>
    <property type="match status" value="1"/>
</dbReference>
<dbReference type="SUPFAM" id="SSF52954">
    <property type="entry name" value="Class II aaRS ABD-related"/>
    <property type="match status" value="1"/>
</dbReference>
<dbReference type="SUPFAM" id="SSF55681">
    <property type="entry name" value="Class II aaRS and biotin synthetases"/>
    <property type="match status" value="1"/>
</dbReference>
<dbReference type="PROSITE" id="PS50862">
    <property type="entry name" value="AA_TRNA_LIGASE_II"/>
    <property type="match status" value="1"/>
</dbReference>
<reference key="1">
    <citation type="journal article" date="2009" name="Infect. Immun.">
        <title>Comparative genomics reveal extensive transposon-mediated genomic plasticity and diversity among potential effector proteins within the genus Coxiella.</title>
        <authorList>
            <person name="Beare P.A."/>
            <person name="Unsworth N."/>
            <person name="Andoh M."/>
            <person name="Voth D.E."/>
            <person name="Omsland A."/>
            <person name="Gilk S.D."/>
            <person name="Williams K.P."/>
            <person name="Sobral B.W."/>
            <person name="Kupko J.J. III"/>
            <person name="Porcella S.F."/>
            <person name="Samuel J.E."/>
            <person name="Heinzen R.A."/>
        </authorList>
    </citation>
    <scope>NUCLEOTIDE SEQUENCE [LARGE SCALE GENOMIC DNA]</scope>
    <source>
        <strain>CbuK_Q154</strain>
    </source>
</reference>
<sequence length="421" mass="47790">MTKSIQAIRGMSDTLPEEIPYWSFLENACRSVVSAYHYREIRFPVVEQTALFKRTIGEATDIVEKEMYTFTDRNGDSLTLRPEGTAGCVRAGIQNGLLYNQIQRLWYLGPMFRHERPQKGRYRQFYQLGVETYGMAGAPIEAELIFMCLRLWKALGLESCIHLELNTLGTLDSRNAYRQALVTYLQSREKELDEDSRRRLHTNPLRILDSKNPDLQPLLAEAPKLIDYLDETSRRHFDQLRSLLDQAEVPFIVNPTLVRGLDYYTHTVFEWVTDQLGAQGTVCAGGRYDNLVELLGGKSTPAAGFAAGLERLVLLLRGVQECLDKIDIYVVIAGEAVIQEGLLMTEQLRNVLPEWVIEADLSGSSLKSQFKRADKSGAKWALVIAEEEIKTNTVTLKHLRETVPQKSLTRDTLIPYLKSEG</sequence>
<comment type="catalytic activity">
    <reaction evidence="1">
        <text>tRNA(His) + L-histidine + ATP = L-histidyl-tRNA(His) + AMP + diphosphate + H(+)</text>
        <dbReference type="Rhea" id="RHEA:17313"/>
        <dbReference type="Rhea" id="RHEA-COMP:9665"/>
        <dbReference type="Rhea" id="RHEA-COMP:9689"/>
        <dbReference type="ChEBI" id="CHEBI:15378"/>
        <dbReference type="ChEBI" id="CHEBI:30616"/>
        <dbReference type="ChEBI" id="CHEBI:33019"/>
        <dbReference type="ChEBI" id="CHEBI:57595"/>
        <dbReference type="ChEBI" id="CHEBI:78442"/>
        <dbReference type="ChEBI" id="CHEBI:78527"/>
        <dbReference type="ChEBI" id="CHEBI:456215"/>
        <dbReference type="EC" id="6.1.1.21"/>
    </reaction>
</comment>
<comment type="subunit">
    <text evidence="1">Homodimer.</text>
</comment>
<comment type="subcellular location">
    <subcellularLocation>
        <location evidence="1">Cytoplasm</location>
    </subcellularLocation>
</comment>
<comment type="similarity">
    <text evidence="1">Belongs to the class-II aminoacyl-tRNA synthetase family.</text>
</comment>
<name>SYH_COXB1</name>
<gene>
    <name evidence="1" type="primary">hisS</name>
    <name type="ordered locus">CbuK_1108</name>
</gene>
<accession>B6J7Q5</accession>
<evidence type="ECO:0000255" key="1">
    <source>
        <dbReference type="HAMAP-Rule" id="MF_00127"/>
    </source>
</evidence>
<feature type="chain" id="PRO_1000095544" description="Histidine--tRNA ligase">
    <location>
        <begin position="1"/>
        <end position="421"/>
    </location>
</feature>
<protein>
    <recommendedName>
        <fullName evidence="1">Histidine--tRNA ligase</fullName>
        <ecNumber evidence="1">6.1.1.21</ecNumber>
    </recommendedName>
    <alternativeName>
        <fullName evidence="1">Histidyl-tRNA synthetase</fullName>
        <shortName evidence="1">HisRS</shortName>
    </alternativeName>
</protein>
<proteinExistence type="inferred from homology"/>
<keyword id="KW-0030">Aminoacyl-tRNA synthetase</keyword>
<keyword id="KW-0067">ATP-binding</keyword>
<keyword id="KW-0963">Cytoplasm</keyword>
<keyword id="KW-0436">Ligase</keyword>
<keyword id="KW-0547">Nucleotide-binding</keyword>
<keyword id="KW-0648">Protein biosynthesis</keyword>
<organism>
    <name type="scientific">Coxiella burnetii (strain CbuK_Q154)</name>
    <name type="common">Coxiella burnetii (strain Q154)</name>
    <dbReference type="NCBI Taxonomy" id="434924"/>
    <lineage>
        <taxon>Bacteria</taxon>
        <taxon>Pseudomonadati</taxon>
        <taxon>Pseudomonadota</taxon>
        <taxon>Gammaproteobacteria</taxon>
        <taxon>Legionellales</taxon>
        <taxon>Coxiellaceae</taxon>
        <taxon>Coxiella</taxon>
    </lineage>
</organism>